<keyword id="KW-0131">Cell cycle</keyword>
<keyword id="KW-0132">Cell division</keyword>
<keyword id="KW-0997">Cell inner membrane</keyword>
<keyword id="KW-1003">Cell membrane</keyword>
<keyword id="KW-0133">Cell shape</keyword>
<keyword id="KW-0961">Cell wall biogenesis/degradation</keyword>
<keyword id="KW-0328">Glycosyltransferase</keyword>
<keyword id="KW-0472">Membrane</keyword>
<keyword id="KW-0573">Peptidoglycan synthesis</keyword>
<keyword id="KW-1185">Reference proteome</keyword>
<keyword id="KW-0808">Transferase</keyword>
<evidence type="ECO:0000255" key="1">
    <source>
        <dbReference type="HAMAP-Rule" id="MF_00033"/>
    </source>
</evidence>
<proteinExistence type="inferred from homology"/>
<name>MURG_PSEPK</name>
<comment type="function">
    <text evidence="1">Cell wall formation. Catalyzes the transfer of a GlcNAc subunit on undecaprenyl-pyrophosphoryl-MurNAc-pentapeptide (lipid intermediate I) to form undecaprenyl-pyrophosphoryl-MurNAc-(pentapeptide)GlcNAc (lipid intermediate II).</text>
</comment>
<comment type="catalytic activity">
    <reaction evidence="1">
        <text>di-trans,octa-cis-undecaprenyl diphospho-N-acetyl-alpha-D-muramoyl-L-alanyl-D-glutamyl-meso-2,6-diaminopimeloyl-D-alanyl-D-alanine + UDP-N-acetyl-alpha-D-glucosamine = di-trans,octa-cis-undecaprenyl diphospho-[N-acetyl-alpha-D-glucosaminyl-(1-&gt;4)]-N-acetyl-alpha-D-muramoyl-L-alanyl-D-glutamyl-meso-2,6-diaminopimeloyl-D-alanyl-D-alanine + UDP + H(+)</text>
        <dbReference type="Rhea" id="RHEA:31227"/>
        <dbReference type="ChEBI" id="CHEBI:15378"/>
        <dbReference type="ChEBI" id="CHEBI:57705"/>
        <dbReference type="ChEBI" id="CHEBI:58223"/>
        <dbReference type="ChEBI" id="CHEBI:61387"/>
        <dbReference type="ChEBI" id="CHEBI:61388"/>
        <dbReference type="EC" id="2.4.1.227"/>
    </reaction>
</comment>
<comment type="pathway">
    <text evidence="1">Cell wall biogenesis; peptidoglycan biosynthesis.</text>
</comment>
<comment type="subcellular location">
    <subcellularLocation>
        <location evidence="1">Cell inner membrane</location>
        <topology evidence="1">Peripheral membrane protein</topology>
        <orientation evidence="1">Cytoplasmic side</orientation>
    </subcellularLocation>
</comment>
<comment type="similarity">
    <text evidence="1">Belongs to the glycosyltransferase 28 family. MurG subfamily.</text>
</comment>
<sequence>MAAEGKNVLIMAGGTGGHVFPALACAREFQARGYSVHWLGTPRGIENELVPQAGLPLHLIQVSGLRGKGKLSLLKAPFTLVKAVLQARRIIRQLKPVCVLGFGGYVTGPGGVAARLCGVPLVIHEQNARAGTANRLLVPLSARVCEAFPNTFEASDKRRTTGNPVRPELFMDAQRTPLGERRARLLVLGGSLGAEPLNKLLPKALSEVPAALRPEVFHQAGKQHAPITAERYHEAGVAAQVEPFIKDMAQAYGWADLVVCRAGALTVSELAAAGLPSMLVPLPHAIDDHQTHNAQYLAREGAAFLMPQATTGAAQLAERLNEVLMQPEKLNVMAGTARRLAKPAATSTVVDICLEVAHG</sequence>
<gene>
    <name evidence="1" type="primary">murG</name>
    <name type="ordered locus">PP_1337</name>
</gene>
<reference key="1">
    <citation type="journal article" date="2002" name="Environ. Microbiol.">
        <title>Complete genome sequence and comparative analysis of the metabolically versatile Pseudomonas putida KT2440.</title>
        <authorList>
            <person name="Nelson K.E."/>
            <person name="Weinel C."/>
            <person name="Paulsen I.T."/>
            <person name="Dodson R.J."/>
            <person name="Hilbert H."/>
            <person name="Martins dos Santos V.A.P."/>
            <person name="Fouts D.E."/>
            <person name="Gill S.R."/>
            <person name="Pop M."/>
            <person name="Holmes M."/>
            <person name="Brinkac L.M."/>
            <person name="Beanan M.J."/>
            <person name="DeBoy R.T."/>
            <person name="Daugherty S.C."/>
            <person name="Kolonay J.F."/>
            <person name="Madupu R."/>
            <person name="Nelson W.C."/>
            <person name="White O."/>
            <person name="Peterson J.D."/>
            <person name="Khouri H.M."/>
            <person name="Hance I."/>
            <person name="Chris Lee P."/>
            <person name="Holtzapple E.K."/>
            <person name="Scanlan D."/>
            <person name="Tran K."/>
            <person name="Moazzez A."/>
            <person name="Utterback T.R."/>
            <person name="Rizzo M."/>
            <person name="Lee K."/>
            <person name="Kosack D."/>
            <person name="Moestl D."/>
            <person name="Wedler H."/>
            <person name="Lauber J."/>
            <person name="Stjepandic D."/>
            <person name="Hoheisel J."/>
            <person name="Straetz M."/>
            <person name="Heim S."/>
            <person name="Kiewitz C."/>
            <person name="Eisen J.A."/>
            <person name="Timmis K.N."/>
            <person name="Duesterhoeft A."/>
            <person name="Tuemmler B."/>
            <person name="Fraser C.M."/>
        </authorList>
    </citation>
    <scope>NUCLEOTIDE SEQUENCE [LARGE SCALE GENOMIC DNA]</scope>
    <source>
        <strain>ATCC 47054 / DSM 6125 / CFBP 8728 / NCIMB 11950 / KT2440</strain>
    </source>
</reference>
<protein>
    <recommendedName>
        <fullName evidence="1">UDP-N-acetylglucosamine--N-acetylmuramyl-(pentapeptide) pyrophosphoryl-undecaprenol N-acetylglucosamine transferase</fullName>
        <ecNumber evidence="1">2.4.1.227</ecNumber>
    </recommendedName>
    <alternativeName>
        <fullName evidence="1">Undecaprenyl-PP-MurNAc-pentapeptide-UDPGlcNAc GlcNAc transferase</fullName>
    </alternativeName>
</protein>
<dbReference type="EC" id="2.4.1.227" evidence="1"/>
<dbReference type="EMBL" id="AE015451">
    <property type="protein sequence ID" value="AAN66960.1"/>
    <property type="molecule type" value="Genomic_DNA"/>
</dbReference>
<dbReference type="RefSeq" id="NP_743496.1">
    <property type="nucleotide sequence ID" value="NC_002947.4"/>
</dbReference>
<dbReference type="RefSeq" id="WP_010952454.1">
    <property type="nucleotide sequence ID" value="NZ_CP169744.1"/>
</dbReference>
<dbReference type="SMR" id="Q88N76"/>
<dbReference type="STRING" id="160488.PP_1337"/>
<dbReference type="CAZy" id="GT28">
    <property type="family name" value="Glycosyltransferase Family 28"/>
</dbReference>
<dbReference type="PaxDb" id="160488-PP_1337"/>
<dbReference type="GeneID" id="83682229"/>
<dbReference type="KEGG" id="ppu:PP_1337"/>
<dbReference type="PATRIC" id="fig|160488.4.peg.1416"/>
<dbReference type="eggNOG" id="COG0707">
    <property type="taxonomic scope" value="Bacteria"/>
</dbReference>
<dbReference type="HOGENOM" id="CLU_037404_2_0_6"/>
<dbReference type="OrthoDB" id="9808936at2"/>
<dbReference type="PhylomeDB" id="Q88N76"/>
<dbReference type="BioCyc" id="PPUT160488:G1G01-1424-MONOMER"/>
<dbReference type="UniPathway" id="UPA00219"/>
<dbReference type="Proteomes" id="UP000000556">
    <property type="component" value="Chromosome"/>
</dbReference>
<dbReference type="GO" id="GO:0005886">
    <property type="term" value="C:plasma membrane"/>
    <property type="evidence" value="ECO:0007669"/>
    <property type="project" value="UniProtKB-SubCell"/>
</dbReference>
<dbReference type="GO" id="GO:0051991">
    <property type="term" value="F:UDP-N-acetyl-D-glucosamine:N-acetylmuramoyl-L-alanyl-D-glutamyl-meso-2,6-diaminopimelyl-D-alanyl-D-alanine-diphosphoundecaprenol 4-beta-N-acetylglucosaminlytransferase activity"/>
    <property type="evidence" value="ECO:0007669"/>
    <property type="project" value="RHEA"/>
</dbReference>
<dbReference type="GO" id="GO:0050511">
    <property type="term" value="F:undecaprenyldiphospho-muramoylpentapeptide beta-N-acetylglucosaminyltransferase activity"/>
    <property type="evidence" value="ECO:0007669"/>
    <property type="project" value="UniProtKB-UniRule"/>
</dbReference>
<dbReference type="GO" id="GO:0005975">
    <property type="term" value="P:carbohydrate metabolic process"/>
    <property type="evidence" value="ECO:0007669"/>
    <property type="project" value="InterPro"/>
</dbReference>
<dbReference type="GO" id="GO:0051301">
    <property type="term" value="P:cell division"/>
    <property type="evidence" value="ECO:0007669"/>
    <property type="project" value="UniProtKB-KW"/>
</dbReference>
<dbReference type="GO" id="GO:0071555">
    <property type="term" value="P:cell wall organization"/>
    <property type="evidence" value="ECO:0007669"/>
    <property type="project" value="UniProtKB-KW"/>
</dbReference>
<dbReference type="GO" id="GO:0030259">
    <property type="term" value="P:lipid glycosylation"/>
    <property type="evidence" value="ECO:0007669"/>
    <property type="project" value="UniProtKB-UniRule"/>
</dbReference>
<dbReference type="GO" id="GO:0009252">
    <property type="term" value="P:peptidoglycan biosynthetic process"/>
    <property type="evidence" value="ECO:0007669"/>
    <property type="project" value="UniProtKB-UniRule"/>
</dbReference>
<dbReference type="GO" id="GO:0008360">
    <property type="term" value="P:regulation of cell shape"/>
    <property type="evidence" value="ECO:0007669"/>
    <property type="project" value="UniProtKB-KW"/>
</dbReference>
<dbReference type="CDD" id="cd03785">
    <property type="entry name" value="GT28_MurG"/>
    <property type="match status" value="1"/>
</dbReference>
<dbReference type="Gene3D" id="3.40.50.2000">
    <property type="entry name" value="Glycogen Phosphorylase B"/>
    <property type="match status" value="2"/>
</dbReference>
<dbReference type="HAMAP" id="MF_00033">
    <property type="entry name" value="MurG"/>
    <property type="match status" value="1"/>
</dbReference>
<dbReference type="InterPro" id="IPR006009">
    <property type="entry name" value="GlcNAc_MurG"/>
</dbReference>
<dbReference type="InterPro" id="IPR007235">
    <property type="entry name" value="Glyco_trans_28_C"/>
</dbReference>
<dbReference type="InterPro" id="IPR004276">
    <property type="entry name" value="GlycoTrans_28_N"/>
</dbReference>
<dbReference type="NCBIfam" id="TIGR01133">
    <property type="entry name" value="murG"/>
    <property type="match status" value="1"/>
</dbReference>
<dbReference type="PANTHER" id="PTHR21015:SF22">
    <property type="entry name" value="GLYCOSYLTRANSFERASE"/>
    <property type="match status" value="1"/>
</dbReference>
<dbReference type="PANTHER" id="PTHR21015">
    <property type="entry name" value="UDP-N-ACETYLGLUCOSAMINE--N-ACETYLMURAMYL-(PENTAPEPTIDE) PYROPHOSPHORYL-UNDECAPRENOL N-ACETYLGLUCOSAMINE TRANSFERASE 1"/>
    <property type="match status" value="1"/>
</dbReference>
<dbReference type="Pfam" id="PF04101">
    <property type="entry name" value="Glyco_tran_28_C"/>
    <property type="match status" value="1"/>
</dbReference>
<dbReference type="Pfam" id="PF03033">
    <property type="entry name" value="Glyco_transf_28"/>
    <property type="match status" value="1"/>
</dbReference>
<dbReference type="SUPFAM" id="SSF53756">
    <property type="entry name" value="UDP-Glycosyltransferase/glycogen phosphorylase"/>
    <property type="match status" value="1"/>
</dbReference>
<accession>Q88N76</accession>
<feature type="chain" id="PRO_0000109198" description="UDP-N-acetylglucosamine--N-acetylmuramyl-(pentapeptide) pyrophosphoryl-undecaprenol N-acetylglucosamine transferase">
    <location>
        <begin position="1"/>
        <end position="359"/>
    </location>
</feature>
<feature type="binding site" evidence="1">
    <location>
        <begin position="15"/>
        <end position="17"/>
    </location>
    <ligand>
        <name>UDP-N-acetyl-alpha-D-glucosamine</name>
        <dbReference type="ChEBI" id="CHEBI:57705"/>
    </ligand>
</feature>
<feature type="binding site" evidence="1">
    <location>
        <position position="127"/>
    </location>
    <ligand>
        <name>UDP-N-acetyl-alpha-D-glucosamine</name>
        <dbReference type="ChEBI" id="CHEBI:57705"/>
    </ligand>
</feature>
<feature type="binding site" evidence="1">
    <location>
        <position position="166"/>
    </location>
    <ligand>
        <name>UDP-N-acetyl-alpha-D-glucosamine</name>
        <dbReference type="ChEBI" id="CHEBI:57705"/>
    </ligand>
</feature>
<feature type="binding site" evidence="1">
    <location>
        <position position="191"/>
    </location>
    <ligand>
        <name>UDP-N-acetyl-alpha-D-glucosamine</name>
        <dbReference type="ChEBI" id="CHEBI:57705"/>
    </ligand>
</feature>
<feature type="binding site" evidence="1">
    <location>
        <position position="245"/>
    </location>
    <ligand>
        <name>UDP-N-acetyl-alpha-D-glucosamine</name>
        <dbReference type="ChEBI" id="CHEBI:57705"/>
    </ligand>
</feature>
<feature type="binding site" evidence="1">
    <location>
        <begin position="264"/>
        <end position="269"/>
    </location>
    <ligand>
        <name>UDP-N-acetyl-alpha-D-glucosamine</name>
        <dbReference type="ChEBI" id="CHEBI:57705"/>
    </ligand>
</feature>
<feature type="binding site" evidence="1">
    <location>
        <position position="290"/>
    </location>
    <ligand>
        <name>UDP-N-acetyl-alpha-D-glucosamine</name>
        <dbReference type="ChEBI" id="CHEBI:57705"/>
    </ligand>
</feature>
<organism>
    <name type="scientific">Pseudomonas putida (strain ATCC 47054 / DSM 6125 / CFBP 8728 / NCIMB 11950 / KT2440)</name>
    <dbReference type="NCBI Taxonomy" id="160488"/>
    <lineage>
        <taxon>Bacteria</taxon>
        <taxon>Pseudomonadati</taxon>
        <taxon>Pseudomonadota</taxon>
        <taxon>Gammaproteobacteria</taxon>
        <taxon>Pseudomonadales</taxon>
        <taxon>Pseudomonadaceae</taxon>
        <taxon>Pseudomonas</taxon>
    </lineage>
</organism>